<protein>
    <recommendedName>
        <fullName>Oxidation resistance protein 1</fullName>
    </recommendedName>
    <alternativeName>
        <fullName>Protein C7</fullName>
    </alternativeName>
</protein>
<dbReference type="EMBL" id="AF333986">
    <property type="protein sequence ID" value="AAK29401.1"/>
    <property type="molecule type" value="mRNA"/>
</dbReference>
<dbReference type="EMBL" id="AABR03055922">
    <property type="status" value="NOT_ANNOTATED_CDS"/>
    <property type="molecule type" value="Genomic_DNA"/>
</dbReference>
<dbReference type="EMBL" id="AABR03056092">
    <property type="status" value="NOT_ANNOTATED_CDS"/>
    <property type="molecule type" value="Genomic_DNA"/>
</dbReference>
<dbReference type="EMBL" id="AABR03059133">
    <property type="status" value="NOT_ANNOTATED_CDS"/>
    <property type="molecule type" value="Genomic_DNA"/>
</dbReference>
<dbReference type="EMBL" id="AABR03060217">
    <property type="status" value="NOT_ANNOTATED_CDS"/>
    <property type="molecule type" value="Genomic_DNA"/>
</dbReference>
<dbReference type="EMBL" id="BC081744">
    <property type="protein sequence ID" value="AAH81744.1"/>
    <property type="molecule type" value="mRNA"/>
</dbReference>
<dbReference type="EMBL" id="BC097465">
    <property type="protein sequence ID" value="AAH97465.1"/>
    <property type="molecule type" value="mRNA"/>
</dbReference>
<dbReference type="EMBL" id="BC166763">
    <property type="protein sequence ID" value="AAI66763.1"/>
    <property type="status" value="ALT_INIT"/>
    <property type="molecule type" value="mRNA"/>
</dbReference>
<dbReference type="RefSeq" id="NP_001184261.1">
    <molecule id="Q4V8B0-3"/>
    <property type="nucleotide sequence ID" value="NM_001197332.2"/>
</dbReference>
<dbReference type="RefSeq" id="NP_476494.2">
    <molecule id="Q4V8B0-1"/>
    <property type="nucleotide sequence ID" value="NM_057153.3"/>
</dbReference>
<dbReference type="RefSeq" id="XP_017450109.1">
    <property type="nucleotide sequence ID" value="XM_017594620.1"/>
</dbReference>
<dbReference type="EMDB" id="EMD-26910"/>
<dbReference type="EMDB" id="EMD-26912"/>
<dbReference type="EMDB" id="EMD-26913"/>
<dbReference type="EMDB" id="EMD-26914"/>
<dbReference type="SMR" id="Q4V8B0"/>
<dbReference type="FunCoup" id="Q4V8B0">
    <property type="interactions" value="3834"/>
</dbReference>
<dbReference type="STRING" id="10116.ENSRNOP00000074393"/>
<dbReference type="GlyGen" id="Q4V8B0">
    <property type="glycosylation" value="2 sites, 1 O-linked glycan (1 site)"/>
</dbReference>
<dbReference type="iPTMnet" id="Q4V8B0"/>
<dbReference type="PhosphoSitePlus" id="Q4V8B0"/>
<dbReference type="PaxDb" id="10116-ENSRNOP00000010856"/>
<dbReference type="GeneID" id="117520"/>
<dbReference type="KEGG" id="rno:117520"/>
<dbReference type="UCSC" id="RGD:621857">
    <molecule id="Q4V8B0-1"/>
    <property type="organism name" value="rat"/>
</dbReference>
<dbReference type="AGR" id="RGD:621857"/>
<dbReference type="CTD" id="55074"/>
<dbReference type="RGD" id="621857">
    <property type="gene designation" value="Oxr1"/>
</dbReference>
<dbReference type="eggNOG" id="KOG2372">
    <property type="taxonomic scope" value="Eukaryota"/>
</dbReference>
<dbReference type="InParanoid" id="Q4V8B0"/>
<dbReference type="PhylomeDB" id="Q4V8B0"/>
<dbReference type="PRO" id="PR:Q4V8B0"/>
<dbReference type="Proteomes" id="UP000002494">
    <property type="component" value="Chromosome 7"/>
</dbReference>
<dbReference type="Bgee" id="ENSRNOG00000056487">
    <property type="expression patterns" value="Expressed in cerebellum and 19 other cell types or tissues"/>
</dbReference>
<dbReference type="ExpressionAtlas" id="Q4V8B0">
    <property type="expression patterns" value="baseline and differential"/>
</dbReference>
<dbReference type="GO" id="GO:0005739">
    <property type="term" value="C:mitochondrion"/>
    <property type="evidence" value="ECO:0000266"/>
    <property type="project" value="RGD"/>
</dbReference>
<dbReference type="GO" id="GO:0005730">
    <property type="term" value="C:nucleolus"/>
    <property type="evidence" value="ECO:0000266"/>
    <property type="project" value="RGD"/>
</dbReference>
<dbReference type="GO" id="GO:0005634">
    <property type="term" value="C:nucleus"/>
    <property type="evidence" value="ECO:0000318"/>
    <property type="project" value="GO_Central"/>
</dbReference>
<dbReference type="GO" id="GO:0016491">
    <property type="term" value="F:oxidoreductase activity"/>
    <property type="evidence" value="ECO:0000266"/>
    <property type="project" value="RGD"/>
</dbReference>
<dbReference type="GO" id="GO:0007628">
    <property type="term" value="P:adult walking behavior"/>
    <property type="evidence" value="ECO:0000266"/>
    <property type="project" value="RGD"/>
</dbReference>
<dbReference type="GO" id="GO:0071447">
    <property type="term" value="P:cellular response to hydroperoxide"/>
    <property type="evidence" value="ECO:0000266"/>
    <property type="project" value="RGD"/>
</dbReference>
<dbReference type="GO" id="GO:1900408">
    <property type="term" value="P:negative regulation of cellular response to oxidative stress"/>
    <property type="evidence" value="ECO:0000266"/>
    <property type="project" value="RGD"/>
</dbReference>
<dbReference type="GO" id="GO:0043524">
    <property type="term" value="P:negative regulation of neuron apoptotic process"/>
    <property type="evidence" value="ECO:0000266"/>
    <property type="project" value="RGD"/>
</dbReference>
<dbReference type="GO" id="GO:0051402">
    <property type="term" value="P:neuron apoptotic process"/>
    <property type="evidence" value="ECO:0000266"/>
    <property type="project" value="RGD"/>
</dbReference>
<dbReference type="GO" id="GO:0006979">
    <property type="term" value="P:response to oxidative stress"/>
    <property type="evidence" value="ECO:0000318"/>
    <property type="project" value="GO_Central"/>
</dbReference>
<dbReference type="CDD" id="cd00118">
    <property type="entry name" value="LysM"/>
    <property type="match status" value="1"/>
</dbReference>
<dbReference type="FunFam" id="3.10.350.10:FF:000002">
    <property type="entry name" value="Oxidation resistance protein 1 isoform X1"/>
    <property type="match status" value="1"/>
</dbReference>
<dbReference type="Gene3D" id="3.10.350.10">
    <property type="entry name" value="LysM domain"/>
    <property type="match status" value="1"/>
</dbReference>
<dbReference type="InterPro" id="IPR018392">
    <property type="entry name" value="LysM_dom"/>
</dbReference>
<dbReference type="InterPro" id="IPR036779">
    <property type="entry name" value="LysM_dom_sf"/>
</dbReference>
<dbReference type="InterPro" id="IPR006571">
    <property type="entry name" value="TLDc_dom"/>
</dbReference>
<dbReference type="PANTHER" id="PTHR23354">
    <property type="entry name" value="NUCLEOLAR PROTEIN 7/ESTROGEN RECEPTOR COACTIVATOR-RELATED"/>
    <property type="match status" value="1"/>
</dbReference>
<dbReference type="PANTHER" id="PTHR23354:SF69">
    <property type="entry name" value="OXIDATION RESISTANCE PROTEIN 1"/>
    <property type="match status" value="1"/>
</dbReference>
<dbReference type="Pfam" id="PF01476">
    <property type="entry name" value="LysM"/>
    <property type="match status" value="1"/>
</dbReference>
<dbReference type="Pfam" id="PF07534">
    <property type="entry name" value="TLD"/>
    <property type="match status" value="1"/>
</dbReference>
<dbReference type="SMART" id="SM00257">
    <property type="entry name" value="LysM"/>
    <property type="match status" value="1"/>
</dbReference>
<dbReference type="SMART" id="SM00584">
    <property type="entry name" value="TLDc"/>
    <property type="match status" value="1"/>
</dbReference>
<dbReference type="SUPFAM" id="SSF54106">
    <property type="entry name" value="LysM domain"/>
    <property type="match status" value="1"/>
</dbReference>
<dbReference type="PROSITE" id="PS51782">
    <property type="entry name" value="LYSM"/>
    <property type="match status" value="1"/>
</dbReference>
<dbReference type="PROSITE" id="PS51886">
    <property type="entry name" value="TLDC"/>
    <property type="match status" value="1"/>
</dbReference>
<feature type="chain" id="PRO_0000231647" description="Oxidation resistance protein 1">
    <location>
        <begin position="1"/>
        <end position="839"/>
    </location>
</feature>
<feature type="domain" description="LysM" evidence="4">
    <location>
        <begin position="91"/>
        <end position="134"/>
    </location>
</feature>
<feature type="domain" description="GRAM">
    <location>
        <begin position="206"/>
        <end position="261"/>
    </location>
</feature>
<feature type="domain" description="TLDc" evidence="5">
    <location>
        <begin position="678"/>
        <end position="839"/>
    </location>
</feature>
<feature type="region of interest" description="Disordered" evidence="6">
    <location>
        <begin position="38"/>
        <end position="91"/>
    </location>
</feature>
<feature type="region of interest" description="Disordered" evidence="6">
    <location>
        <begin position="140"/>
        <end position="195"/>
    </location>
</feature>
<feature type="region of interest" description="Disordered" evidence="6">
    <location>
        <begin position="292"/>
        <end position="401"/>
    </location>
</feature>
<feature type="region of interest" description="Disordered" evidence="6">
    <location>
        <begin position="415"/>
        <end position="540"/>
    </location>
</feature>
<feature type="region of interest" description="Mediates oxidative antimutator activity" evidence="1">
    <location>
        <begin position="543"/>
        <end position="570"/>
    </location>
</feature>
<feature type="region of interest" description="Disordered" evidence="6">
    <location>
        <begin position="648"/>
        <end position="677"/>
    </location>
</feature>
<feature type="compositionally biased region" description="Basic and acidic residues" evidence="6">
    <location>
        <begin position="69"/>
        <end position="81"/>
    </location>
</feature>
<feature type="compositionally biased region" description="Low complexity" evidence="6">
    <location>
        <begin position="140"/>
        <end position="161"/>
    </location>
</feature>
<feature type="compositionally biased region" description="Basic and acidic residues" evidence="6">
    <location>
        <begin position="163"/>
        <end position="177"/>
    </location>
</feature>
<feature type="compositionally biased region" description="Basic and acidic residues" evidence="6">
    <location>
        <begin position="340"/>
        <end position="356"/>
    </location>
</feature>
<feature type="compositionally biased region" description="Polar residues" evidence="6">
    <location>
        <begin position="357"/>
        <end position="378"/>
    </location>
</feature>
<feature type="compositionally biased region" description="Polar residues" evidence="6">
    <location>
        <begin position="387"/>
        <end position="397"/>
    </location>
</feature>
<feature type="compositionally biased region" description="Basic and acidic residues" evidence="6">
    <location>
        <begin position="433"/>
        <end position="450"/>
    </location>
</feature>
<feature type="compositionally biased region" description="Basic and acidic residues" evidence="6">
    <location>
        <begin position="469"/>
        <end position="497"/>
    </location>
</feature>
<feature type="compositionally biased region" description="Polar residues" evidence="6">
    <location>
        <begin position="502"/>
        <end position="519"/>
    </location>
</feature>
<feature type="modified residue" description="Phosphoserine" evidence="3">
    <location>
        <position position="83"/>
    </location>
</feature>
<feature type="modified residue" description="Phosphothreonine" evidence="2">
    <location>
        <position position="111"/>
    </location>
</feature>
<feature type="modified residue" description="Phosphoserine" evidence="10">
    <location>
        <position position="194"/>
    </location>
</feature>
<feature type="modified residue" description="Phosphoserine" evidence="10">
    <location>
        <position position="195"/>
    </location>
</feature>
<feature type="modified residue" description="Phosphoserine" evidence="10">
    <location>
        <position position="197"/>
    </location>
</feature>
<feature type="modified residue" description="Phosphoserine" evidence="3">
    <location>
        <position position="287"/>
    </location>
</feature>
<feature type="modified residue" description="Phosphoserine" evidence="10">
    <location>
        <position position="327"/>
    </location>
</feature>
<feature type="modified residue" description="Phosphoserine" evidence="10">
    <location>
        <position position="329"/>
    </location>
</feature>
<feature type="modified residue" description="Phosphothreonine" evidence="2">
    <location>
        <position position="334"/>
    </location>
</feature>
<feature type="modified residue" description="Phosphoserine" evidence="10">
    <location>
        <position position="339"/>
    </location>
</feature>
<feature type="modified residue" description="Phosphoserine" evidence="10">
    <location>
        <position position="488"/>
    </location>
</feature>
<feature type="splice variant" id="VSP_017869" description="In isoform 3." evidence="7 8">
    <location>
        <begin position="1"/>
        <end position="623"/>
    </location>
</feature>
<feature type="splice variant" id="VSP_017870" description="In isoform 2." evidence="8">
    <location>
        <begin position="1"/>
        <end position="510"/>
    </location>
</feature>
<feature type="splice variant" id="VSP_017871" description="In isoform 2." evidence="8">
    <original>RDTIQQVAQRESKHRGAPADAHGEGSSLLKEKRRHRLHKFLCLRVGKPMRKTFVSQASATMQQYAQRDKKHEYWFAVPQERTDHLYAFFIQWSPEIYAEDTGEYTREPGFIVVKKMAESGPDEAPAGEAAAREWE</original>
    <variation>MEKAYTLIVFFLLLRLSFILCGFPEATCFWRINHNEHLESNMRKDCGFILFTIPVHLVEDHFRVLLDFPFPLRCAVCLAILVSRNRILKEKQTAVLIVSDVLPMRFPTPQVVSVAEYHRRIDALNTEELRTLCRRLQ</variation>
    <location>
        <begin position="511"/>
        <end position="645"/>
    </location>
</feature>
<feature type="splice variant" id="VSP_017872" description="In isoform 3." evidence="7 8">
    <original>KKMAESGPDEAPAGEAAAREWE</original>
    <variation>MSRLWYGKKGRRHQQVNHKYTL</variation>
    <location>
        <begin position="624"/>
        <end position="645"/>
    </location>
</feature>
<gene>
    <name type="primary">Oxr1</name>
    <name type="synonym">C7</name>
</gene>
<comment type="function">
    <text evidence="1">May be involved in protection from oxidative damage.</text>
</comment>
<comment type="subcellular location">
    <subcellularLocation>
        <location evidence="1">Mitochondrion</location>
    </subcellularLocation>
</comment>
<comment type="alternative products">
    <event type="alternative splicing"/>
    <isoform>
        <id>Q4V8B0-1</id>
        <name>1</name>
        <sequence type="displayed"/>
    </isoform>
    <isoform>
        <id>Q4V8B0-2</id>
        <name>2</name>
        <sequence type="described" ref="VSP_017870 VSP_017871"/>
    </isoform>
    <isoform>
        <id>Q4V8B0-3</id>
        <name>3</name>
        <name>C7C</name>
        <sequence type="described" ref="VSP_017869 VSP_017872"/>
    </isoform>
</comment>
<comment type="similarity">
    <text evidence="9">Belongs to the OXR1 family.</text>
</comment>
<comment type="sequence caution" evidence="9">
    <conflict type="erroneous initiation">
        <sequence resource="EMBL-CDS" id="AAI66763"/>
    </conflict>
    <text>Truncated N-terminus.</text>
</comment>
<sequence>MDYLTTFTGKSGRLLRGTASRLWGLGGGGEARQVRFEDYLREPAPGDPGCGPGELRPPSPTSPEGPDTGQKKTLDKKDGRRMSFQKPKGTIEYTVESRDSLNSIALKFDTTPNELVQLNKLFSRAVVTGQVLYVPDPEYVSSVESSPSLSPVSPLSPTSSEAEFDKTTTPDVVHPKEAPPSSTESSIRPARVVSSTSEEEEAFTEKFLKINCKYITNGKGTVSGVLLVTPNNIMFDPHKTDPLVQENGCEEYGIMCPMEEVMSAAMYKEILDSKLKESLPIEVDQLSGRGFCHSKKMTGVPAEETDSRSRDQGNDSVSTAPRSTEESLSEDVFTESELSPIREELPSSELRQEKSSDASSESVQTVSQIEVESLTAASESADVPDHTNANSGRSSSEVGALSHETGLSSLEIATKEGDKATGNLQEVSGPKEQSTDIKGQDNQDSFHHENSLQQEAGEDSLSSGETVELTEKPTVLKDQQGKELKRDSETEVEELRKLWKTHSMQQAKQQRDTIQQVAQRESKHRGAPADAHGEGSSLLKEKRRHRLHKFLCLRVGKPMRKTFVSQASATMQQYAQRDKKHEYWFAVPQERTDHLYAFFIQWSPEIYAEDTGEYTREPGFIVVKKMAESGPDEAPAGEAAAREWEITTREDINSKQAAPAKADLEPESFRPNLSDPSELLLPDQIEKLTKHLPPRTIGYPWTLVYGTGKHGTSLKTLYRTMTGLDTPVLMVIKDSDGQVFGALASEPFKVSDGFYGTGETFVFTFCPEFEVFKWTGDNMFFIKGDMDSLAFGGGGGEFALWLDGDLYHGRSHSCKTFGNHTLSKKEDFFIQDIEIWAFE</sequence>
<keyword id="KW-0025">Alternative splicing</keyword>
<keyword id="KW-0496">Mitochondrion</keyword>
<keyword id="KW-0597">Phosphoprotein</keyword>
<keyword id="KW-1185">Reference proteome</keyword>
<organism>
    <name type="scientific">Rattus norvegicus</name>
    <name type="common">Rat</name>
    <dbReference type="NCBI Taxonomy" id="10116"/>
    <lineage>
        <taxon>Eukaryota</taxon>
        <taxon>Metazoa</taxon>
        <taxon>Chordata</taxon>
        <taxon>Craniata</taxon>
        <taxon>Vertebrata</taxon>
        <taxon>Euteleostomi</taxon>
        <taxon>Mammalia</taxon>
        <taxon>Eutheria</taxon>
        <taxon>Euarchontoglires</taxon>
        <taxon>Glires</taxon>
        <taxon>Rodentia</taxon>
        <taxon>Myomorpha</taxon>
        <taxon>Muroidea</taxon>
        <taxon>Muridae</taxon>
        <taxon>Murinae</taxon>
        <taxon>Rattus</taxon>
    </lineage>
</organism>
<accession>Q4V8B0</accession>
<accession>B2RYF9</accession>
<accession>Q99MK0</accession>
<name>OXR1_RAT</name>
<proteinExistence type="evidence at protein level"/>
<evidence type="ECO:0000250" key="1"/>
<evidence type="ECO:0000250" key="2">
    <source>
        <dbReference type="UniProtKB" id="Q4KMM3"/>
    </source>
</evidence>
<evidence type="ECO:0000250" key="3">
    <source>
        <dbReference type="UniProtKB" id="Q8N573"/>
    </source>
</evidence>
<evidence type="ECO:0000255" key="4">
    <source>
        <dbReference type="PROSITE-ProRule" id="PRU01118"/>
    </source>
</evidence>
<evidence type="ECO:0000255" key="5">
    <source>
        <dbReference type="PROSITE-ProRule" id="PRU01234"/>
    </source>
</evidence>
<evidence type="ECO:0000256" key="6">
    <source>
        <dbReference type="SAM" id="MobiDB-lite"/>
    </source>
</evidence>
<evidence type="ECO:0000303" key="7">
    <source>
    </source>
</evidence>
<evidence type="ECO:0000303" key="8">
    <source>
    </source>
</evidence>
<evidence type="ECO:0000305" key="9"/>
<evidence type="ECO:0007744" key="10">
    <source>
    </source>
</evidence>
<reference key="1">
    <citation type="journal article" date="2001" name="Biochem. Biophys. Res. Commun.">
        <title>C7, a novel nucleolar protein, is the mouse homologue of the Drosophila late puff product L82 and an isoform of human OXR1.</title>
        <authorList>
            <person name="Fischer H."/>
            <person name="Zhang X.U."/>
            <person name="O'Brien K.P."/>
            <person name="Kylsten P."/>
            <person name="Engvall E."/>
        </authorList>
    </citation>
    <scope>NUCLEOTIDE SEQUENCE [MRNA] (ISOFORM 3)</scope>
</reference>
<reference key="2">
    <citation type="journal article" date="2004" name="Nature">
        <title>Genome sequence of the Brown Norway rat yields insights into mammalian evolution.</title>
        <authorList>
            <person name="Gibbs R.A."/>
            <person name="Weinstock G.M."/>
            <person name="Metzker M.L."/>
            <person name="Muzny D.M."/>
            <person name="Sodergren E.J."/>
            <person name="Scherer S."/>
            <person name="Scott G."/>
            <person name="Steffen D."/>
            <person name="Worley K.C."/>
            <person name="Burch P.E."/>
            <person name="Okwuonu G."/>
            <person name="Hines S."/>
            <person name="Lewis L."/>
            <person name="Deramo C."/>
            <person name="Delgado O."/>
            <person name="Dugan-Rocha S."/>
            <person name="Miner G."/>
            <person name="Morgan M."/>
            <person name="Hawes A."/>
            <person name="Gill R."/>
            <person name="Holt R.A."/>
            <person name="Adams M.D."/>
            <person name="Amanatides P.G."/>
            <person name="Baden-Tillson H."/>
            <person name="Barnstead M."/>
            <person name="Chin S."/>
            <person name="Evans C.A."/>
            <person name="Ferriera S."/>
            <person name="Fosler C."/>
            <person name="Glodek A."/>
            <person name="Gu Z."/>
            <person name="Jennings D."/>
            <person name="Kraft C.L."/>
            <person name="Nguyen T."/>
            <person name="Pfannkoch C.M."/>
            <person name="Sitter C."/>
            <person name="Sutton G.G."/>
            <person name="Venter J.C."/>
            <person name="Woodage T."/>
            <person name="Smith D."/>
            <person name="Lee H.-M."/>
            <person name="Gustafson E."/>
            <person name="Cahill P."/>
            <person name="Kana A."/>
            <person name="Doucette-Stamm L."/>
            <person name="Weinstock K."/>
            <person name="Fechtel K."/>
            <person name="Weiss R.B."/>
            <person name="Dunn D.M."/>
            <person name="Green E.D."/>
            <person name="Blakesley R.W."/>
            <person name="Bouffard G.G."/>
            <person name="De Jong P.J."/>
            <person name="Osoegawa K."/>
            <person name="Zhu B."/>
            <person name="Marra M."/>
            <person name="Schein J."/>
            <person name="Bosdet I."/>
            <person name="Fjell C."/>
            <person name="Jones S."/>
            <person name="Krzywinski M."/>
            <person name="Mathewson C."/>
            <person name="Siddiqui A."/>
            <person name="Wye N."/>
            <person name="McPherson J."/>
            <person name="Zhao S."/>
            <person name="Fraser C.M."/>
            <person name="Shetty J."/>
            <person name="Shatsman S."/>
            <person name="Geer K."/>
            <person name="Chen Y."/>
            <person name="Abramzon S."/>
            <person name="Nierman W.C."/>
            <person name="Havlak P.H."/>
            <person name="Chen R."/>
            <person name="Durbin K.J."/>
            <person name="Egan A."/>
            <person name="Ren Y."/>
            <person name="Song X.-Z."/>
            <person name="Li B."/>
            <person name="Liu Y."/>
            <person name="Qin X."/>
            <person name="Cawley S."/>
            <person name="Cooney A.J."/>
            <person name="D'Souza L.M."/>
            <person name="Martin K."/>
            <person name="Wu J.Q."/>
            <person name="Gonzalez-Garay M.L."/>
            <person name="Jackson A.R."/>
            <person name="Kalafus K.J."/>
            <person name="McLeod M.P."/>
            <person name="Milosavljevic A."/>
            <person name="Virk D."/>
            <person name="Volkov A."/>
            <person name="Wheeler D.A."/>
            <person name="Zhang Z."/>
            <person name="Bailey J.A."/>
            <person name="Eichler E.E."/>
            <person name="Tuzun E."/>
            <person name="Birney E."/>
            <person name="Mongin E."/>
            <person name="Ureta-Vidal A."/>
            <person name="Woodwark C."/>
            <person name="Zdobnov E."/>
            <person name="Bork P."/>
            <person name="Suyama M."/>
            <person name="Torrents D."/>
            <person name="Alexandersson M."/>
            <person name="Trask B.J."/>
            <person name="Young J.M."/>
            <person name="Huang H."/>
            <person name="Wang H."/>
            <person name="Xing H."/>
            <person name="Daniels S."/>
            <person name="Gietzen D."/>
            <person name="Schmidt J."/>
            <person name="Stevens K."/>
            <person name="Vitt U."/>
            <person name="Wingrove J."/>
            <person name="Camara F."/>
            <person name="Mar Alba M."/>
            <person name="Abril J.F."/>
            <person name="Guigo R."/>
            <person name="Smit A."/>
            <person name="Dubchak I."/>
            <person name="Rubin E.M."/>
            <person name="Couronne O."/>
            <person name="Poliakov A."/>
            <person name="Huebner N."/>
            <person name="Ganten D."/>
            <person name="Goesele C."/>
            <person name="Hummel O."/>
            <person name="Kreitler T."/>
            <person name="Lee Y.-A."/>
            <person name="Monti J."/>
            <person name="Schulz H."/>
            <person name="Zimdahl H."/>
            <person name="Himmelbauer H."/>
            <person name="Lehrach H."/>
            <person name="Jacob H.J."/>
            <person name="Bromberg S."/>
            <person name="Gullings-Handley J."/>
            <person name="Jensen-Seaman M.I."/>
            <person name="Kwitek A.E."/>
            <person name="Lazar J."/>
            <person name="Pasko D."/>
            <person name="Tonellato P.J."/>
            <person name="Twigger S."/>
            <person name="Ponting C.P."/>
            <person name="Duarte J.M."/>
            <person name="Rice S."/>
            <person name="Goodstadt L."/>
            <person name="Beatson S.A."/>
            <person name="Emes R.D."/>
            <person name="Winter E.E."/>
            <person name="Webber C."/>
            <person name="Brandt P."/>
            <person name="Nyakatura G."/>
            <person name="Adetobi M."/>
            <person name="Chiaromonte F."/>
            <person name="Elnitski L."/>
            <person name="Eswara P."/>
            <person name="Hardison R.C."/>
            <person name="Hou M."/>
            <person name="Kolbe D."/>
            <person name="Makova K."/>
            <person name="Miller W."/>
            <person name="Nekrutenko A."/>
            <person name="Riemer C."/>
            <person name="Schwartz S."/>
            <person name="Taylor J."/>
            <person name="Yang S."/>
            <person name="Zhang Y."/>
            <person name="Lindpaintner K."/>
            <person name="Andrews T.D."/>
            <person name="Caccamo M."/>
            <person name="Clamp M."/>
            <person name="Clarke L."/>
            <person name="Curwen V."/>
            <person name="Durbin R.M."/>
            <person name="Eyras E."/>
            <person name="Searle S.M."/>
            <person name="Cooper G.M."/>
            <person name="Batzoglou S."/>
            <person name="Brudno M."/>
            <person name="Sidow A."/>
            <person name="Stone E.A."/>
            <person name="Payseur B.A."/>
            <person name="Bourque G."/>
            <person name="Lopez-Otin C."/>
            <person name="Puente X.S."/>
            <person name="Chakrabarti K."/>
            <person name="Chatterji S."/>
            <person name="Dewey C."/>
            <person name="Pachter L."/>
            <person name="Bray N."/>
            <person name="Yap V.B."/>
            <person name="Caspi A."/>
            <person name="Tesler G."/>
            <person name="Pevzner P.A."/>
            <person name="Haussler D."/>
            <person name="Roskin K.M."/>
            <person name="Baertsch R."/>
            <person name="Clawson H."/>
            <person name="Furey T.S."/>
            <person name="Hinrichs A.S."/>
            <person name="Karolchik D."/>
            <person name="Kent W.J."/>
            <person name="Rosenbloom K.R."/>
            <person name="Trumbower H."/>
            <person name="Weirauch M."/>
            <person name="Cooper D.N."/>
            <person name="Stenson P.D."/>
            <person name="Ma B."/>
            <person name="Brent M."/>
            <person name="Arumugam M."/>
            <person name="Shteynberg D."/>
            <person name="Copley R.R."/>
            <person name="Taylor M.S."/>
            <person name="Riethman H."/>
            <person name="Mudunuri U."/>
            <person name="Peterson J."/>
            <person name="Guyer M."/>
            <person name="Felsenfeld A."/>
            <person name="Old S."/>
            <person name="Mockrin S."/>
            <person name="Collins F.S."/>
        </authorList>
    </citation>
    <scope>NUCLEOTIDE SEQUENCE [LARGE SCALE GENOMIC DNA]</scope>
    <source>
        <strain>Brown Norway</strain>
    </source>
</reference>
<reference key="3">
    <citation type="journal article" date="2004" name="Genome Res.">
        <title>The status, quality, and expansion of the NIH full-length cDNA project: the Mammalian Gene Collection (MGC).</title>
        <authorList>
            <consortium name="The MGC Project Team"/>
        </authorList>
    </citation>
    <scope>NUCLEOTIDE SEQUENCE [LARGE SCALE MRNA] (ISOFORMS 1; 2 AND 3)</scope>
    <source>
        <tissue>Prostate</tissue>
        <tissue>Testis</tissue>
    </source>
</reference>
<reference key="4">
    <citation type="journal article" date="2012" name="Nat. Commun.">
        <title>Quantitative maps of protein phosphorylation sites across 14 different rat organs and tissues.</title>
        <authorList>
            <person name="Lundby A."/>
            <person name="Secher A."/>
            <person name="Lage K."/>
            <person name="Nordsborg N.B."/>
            <person name="Dmytriyev A."/>
            <person name="Lundby C."/>
            <person name="Olsen J.V."/>
        </authorList>
    </citation>
    <scope>PHOSPHORYLATION [LARGE SCALE ANALYSIS] AT SER-194; SER-195; SER-197; SER-327; SER-329; SER-339 AND SER-488</scope>
    <scope>IDENTIFICATION BY MASS SPECTROMETRY [LARGE SCALE ANALYSIS]</scope>
</reference>